<reference key="1">
    <citation type="journal article" date="1996" name="Mol. Cell. Neurosci.">
        <title>Intracellular compartmentalization of two differentially spliced s-rex/NSP mRNAs in neurons.</title>
        <authorList>
            <person name="Baka I.D."/>
            <person name="Ninkina N.N."/>
            <person name="Pinon L.G.P."/>
            <person name="Adu J."/>
            <person name="Davies A.M."/>
            <person name="Georgiev G.P."/>
            <person name="Buchman V.L."/>
        </authorList>
    </citation>
    <scope>NUCLEOTIDE SEQUENCE [MRNA] (ISOFORMS RTN1-B AND RTN1-S)</scope>
    <source>
        <strain>Wistar</strain>
        <tissue>Brain cortex</tissue>
    </source>
</reference>
<reference key="2">
    <citation type="journal article" date="2012" name="Nat. Commun.">
        <title>Quantitative maps of protein phosphorylation sites across 14 different rat organs and tissues.</title>
        <authorList>
            <person name="Lundby A."/>
            <person name="Secher A."/>
            <person name="Lage K."/>
            <person name="Nordsborg N.B."/>
            <person name="Dmytriyev A."/>
            <person name="Lundby C."/>
            <person name="Olsen J.V."/>
        </authorList>
    </citation>
    <scope>PHOSPHORYLATION [LARGE SCALE ANALYSIS] AT SER-13; SER-68; SER-210; SER-241; SER-325; SER-348; SER-350 AND SER-485</scope>
    <scope>IDENTIFICATION BY MASS SPECTROMETRY [LARGE SCALE ANALYSIS]</scope>
</reference>
<keyword id="KW-0025">Alternative splicing</keyword>
<keyword id="KW-0256">Endoplasmic reticulum</keyword>
<keyword id="KW-0333">Golgi apparatus</keyword>
<keyword id="KW-0472">Membrane</keyword>
<keyword id="KW-0597">Phosphoprotein</keyword>
<keyword id="KW-1185">Reference proteome</keyword>
<keyword id="KW-0812">Transmembrane</keyword>
<keyword id="KW-1133">Transmembrane helix</keyword>
<dbReference type="EMBL" id="U17604">
    <property type="protein sequence ID" value="AAC53046.1"/>
    <property type="molecule type" value="mRNA"/>
</dbReference>
<dbReference type="EMBL" id="U17603">
    <property type="protein sequence ID" value="AAC53045.1"/>
    <property type="molecule type" value="mRNA"/>
</dbReference>
<dbReference type="RefSeq" id="NP_446317.1">
    <property type="nucleotide sequence ID" value="NM_053865.1"/>
</dbReference>
<dbReference type="RefSeq" id="XP_008762912.1">
    <molecule id="Q64548-2"/>
    <property type="nucleotide sequence ID" value="XM_008764690.4"/>
</dbReference>
<dbReference type="SMR" id="Q64548"/>
<dbReference type="BioGRID" id="250529">
    <property type="interactions" value="5"/>
</dbReference>
<dbReference type="CORUM" id="Q64548"/>
<dbReference type="FunCoup" id="Q64548">
    <property type="interactions" value="1553"/>
</dbReference>
<dbReference type="IntAct" id="Q64548">
    <property type="interactions" value="1"/>
</dbReference>
<dbReference type="MINT" id="Q64548"/>
<dbReference type="STRING" id="10116.ENSRNOP00000064845"/>
<dbReference type="iPTMnet" id="Q64548"/>
<dbReference type="PhosphoSitePlus" id="Q64548"/>
<dbReference type="SwissPalm" id="Q64548"/>
<dbReference type="jPOST" id="Q64548"/>
<dbReference type="Ensembl" id="ENSRNOT00000006373.5">
    <molecule id="Q64548-2"/>
    <property type="protein sequence ID" value="ENSRNOP00000006373.3"/>
    <property type="gene ID" value="ENSRNOG00000004794.9"/>
</dbReference>
<dbReference type="GeneID" id="116644"/>
<dbReference type="KEGG" id="rno:116644"/>
<dbReference type="UCSC" id="RGD:620986">
    <molecule id="Q64548-1"/>
    <property type="organism name" value="rat"/>
</dbReference>
<dbReference type="AGR" id="RGD:620986"/>
<dbReference type="CTD" id="6252"/>
<dbReference type="RGD" id="620986">
    <property type="gene designation" value="Rtn1"/>
</dbReference>
<dbReference type="VEuPathDB" id="HostDB:ENSRNOG00000004794"/>
<dbReference type="GeneTree" id="ENSGT00940000155077"/>
<dbReference type="HOGENOM" id="CLU_048580_2_1_1"/>
<dbReference type="InParanoid" id="Q64548"/>
<dbReference type="OMA" id="CLWSCWK"/>
<dbReference type="PhylomeDB" id="Q64548"/>
<dbReference type="TreeFam" id="TF105431"/>
<dbReference type="PRO" id="PR:Q64548"/>
<dbReference type="Proteomes" id="UP000002494">
    <property type="component" value="Chromosome 6"/>
</dbReference>
<dbReference type="Bgee" id="ENSRNOG00000004794">
    <property type="expression patterns" value="Expressed in Ammon's horn and 20 other cell types or tissues"/>
</dbReference>
<dbReference type="ExpressionAtlas" id="Q64548">
    <property type="expression patterns" value="baseline and differential"/>
</dbReference>
<dbReference type="GO" id="GO:0030425">
    <property type="term" value="C:dendrite"/>
    <property type="evidence" value="ECO:0000266"/>
    <property type="project" value="RGD"/>
</dbReference>
<dbReference type="GO" id="GO:0005783">
    <property type="term" value="C:endoplasmic reticulum"/>
    <property type="evidence" value="ECO:0000266"/>
    <property type="project" value="RGD"/>
</dbReference>
<dbReference type="GO" id="GO:0005789">
    <property type="term" value="C:endoplasmic reticulum membrane"/>
    <property type="evidence" value="ECO:0000318"/>
    <property type="project" value="GO_Central"/>
</dbReference>
<dbReference type="GO" id="GO:0000139">
    <property type="term" value="C:Golgi membrane"/>
    <property type="evidence" value="ECO:0000266"/>
    <property type="project" value="RGD"/>
</dbReference>
<dbReference type="GO" id="GO:0043005">
    <property type="term" value="C:neuron projection"/>
    <property type="evidence" value="ECO:0000318"/>
    <property type="project" value="GO_Central"/>
</dbReference>
<dbReference type="GO" id="GO:0043025">
    <property type="term" value="C:neuronal cell body"/>
    <property type="evidence" value="ECO:0000266"/>
    <property type="project" value="RGD"/>
</dbReference>
<dbReference type="GO" id="GO:0014069">
    <property type="term" value="C:postsynaptic density"/>
    <property type="evidence" value="ECO:0000318"/>
    <property type="project" value="GO_Central"/>
</dbReference>
<dbReference type="GO" id="GO:0005790">
    <property type="term" value="C:smooth endoplasmic reticulum"/>
    <property type="evidence" value="ECO:0000314"/>
    <property type="project" value="MGI"/>
</dbReference>
<dbReference type="GO" id="GO:0007420">
    <property type="term" value="P:brain development"/>
    <property type="evidence" value="ECO:0000318"/>
    <property type="project" value="GO_Central"/>
</dbReference>
<dbReference type="GO" id="GO:0071787">
    <property type="term" value="P:endoplasmic reticulum tubular network formation"/>
    <property type="evidence" value="ECO:0000318"/>
    <property type="project" value="GO_Central"/>
</dbReference>
<dbReference type="GO" id="GO:1902430">
    <property type="term" value="P:negative regulation of amyloid-beta formation"/>
    <property type="evidence" value="ECO:0000250"/>
    <property type="project" value="UniProtKB"/>
</dbReference>
<dbReference type="GO" id="GO:0030182">
    <property type="term" value="P:neuron differentiation"/>
    <property type="evidence" value="ECO:0000318"/>
    <property type="project" value="GO_Central"/>
</dbReference>
<dbReference type="FunFam" id="1.20.5.2480:FF:000001">
    <property type="entry name" value="Reticulon"/>
    <property type="match status" value="1"/>
</dbReference>
<dbReference type="Gene3D" id="1.20.5.2480">
    <property type="match status" value="1"/>
</dbReference>
<dbReference type="InterPro" id="IPR003388">
    <property type="entry name" value="Reticulon"/>
</dbReference>
<dbReference type="InterPro" id="IPR046964">
    <property type="entry name" value="RTN1-4"/>
</dbReference>
<dbReference type="PANTHER" id="PTHR45799:SF5">
    <property type="entry name" value="RETICULON-1"/>
    <property type="match status" value="1"/>
</dbReference>
<dbReference type="PANTHER" id="PTHR45799">
    <property type="entry name" value="RETICULON-LIKE PROTEIN"/>
    <property type="match status" value="1"/>
</dbReference>
<dbReference type="Pfam" id="PF02453">
    <property type="entry name" value="Reticulon"/>
    <property type="match status" value="1"/>
</dbReference>
<dbReference type="PROSITE" id="PS50845">
    <property type="entry name" value="RETICULON"/>
    <property type="match status" value="1"/>
</dbReference>
<feature type="chain" id="PRO_0000168161" description="Reticulon-1">
    <location>
        <begin position="1"/>
        <end position="777"/>
    </location>
</feature>
<feature type="transmembrane region" description="Helical" evidence="2">
    <location>
        <begin position="604"/>
        <end position="624"/>
    </location>
</feature>
<feature type="transmembrane region" description="Helical" evidence="2">
    <location>
        <begin position="706"/>
        <end position="726"/>
    </location>
</feature>
<feature type="domain" description="Reticulon" evidence="3">
    <location>
        <begin position="590"/>
        <end position="777"/>
    </location>
</feature>
<feature type="region of interest" description="Disordered" evidence="4">
    <location>
        <begin position="1"/>
        <end position="77"/>
    </location>
</feature>
<feature type="region of interest" description="Disordered" evidence="4">
    <location>
        <begin position="129"/>
        <end position="182"/>
    </location>
</feature>
<feature type="region of interest" description="Disordered" evidence="4">
    <location>
        <begin position="198"/>
        <end position="245"/>
    </location>
</feature>
<feature type="region of interest" description="Disordered" evidence="4">
    <location>
        <begin position="293"/>
        <end position="573"/>
    </location>
</feature>
<feature type="compositionally biased region" description="Basic and acidic residues" evidence="4">
    <location>
        <begin position="199"/>
        <end position="233"/>
    </location>
</feature>
<feature type="compositionally biased region" description="Low complexity" evidence="4">
    <location>
        <begin position="326"/>
        <end position="339"/>
    </location>
</feature>
<feature type="compositionally biased region" description="Polar residues" evidence="4">
    <location>
        <begin position="393"/>
        <end position="406"/>
    </location>
</feature>
<feature type="compositionally biased region" description="Basic and acidic residues" evidence="4">
    <location>
        <begin position="495"/>
        <end position="510"/>
    </location>
</feature>
<feature type="compositionally biased region" description="Polar residues" evidence="4">
    <location>
        <begin position="525"/>
        <end position="534"/>
    </location>
</feature>
<feature type="modified residue" description="Phosphoserine" evidence="6">
    <location>
        <position position="13"/>
    </location>
</feature>
<feature type="modified residue" description="Phosphoserine" evidence="6">
    <location>
        <position position="68"/>
    </location>
</feature>
<feature type="modified residue" description="Phosphoserine" evidence="6">
    <location>
        <position position="210"/>
    </location>
</feature>
<feature type="modified residue" description="Phosphoserine" evidence="6">
    <location>
        <position position="241"/>
    </location>
</feature>
<feature type="modified residue" description="Phosphoserine" evidence="6">
    <location>
        <position position="325"/>
    </location>
</feature>
<feature type="modified residue" description="Phosphoserine" evidence="6">
    <location>
        <position position="348"/>
    </location>
</feature>
<feature type="modified residue" description="Phosphoserine" evidence="6">
    <location>
        <position position="350"/>
    </location>
</feature>
<feature type="modified residue" description="Phosphoserine" evidence="6">
    <location>
        <position position="485"/>
    </location>
</feature>
<feature type="splice variant" id="VSP_005647" description="In isoform RTN1-S." evidence="5">
    <location>
        <begin position="1"/>
        <end position="569"/>
    </location>
</feature>
<feature type="splice variant" id="VSP_005648" description="In isoform RTN1-S." evidence="5">
    <original>IPGPLGSDLVPPLPFFNKQK</original>
    <variation>MQATADSTKMDCVWSNWKSQ</variation>
    <location>
        <begin position="570"/>
        <end position="589"/>
    </location>
</feature>
<sequence length="777" mass="83002">MAAPPDLQDEPLSPANPGSQLFGGRGEGEEATPKGARPAQQDGEPAWGSGAGAGVVSSRGLCSGPARSPPVAMETASTGVAAVPDALDHSSSPTLKDGEGACYTSLISDICYPPREDSAYFTGILQKENGHITTSESPEELGTPGPSLPEVPGTEPHGLLSSDSGIEMTPAESTEVNKILADPLDQMKAEACKYIDITRPQEAKGQEEQSPGLEDKDLDFKDKDSEVSTKPEGVHAPNQPSPVEGKLIKDNLFEESTFAPYIDELSDEQHRMSLVTAPVKITLTEIGPPVMTATHETIPEKQDLCLKPSPDTVPTVTVSEPEDDSPGSVTPPSSGTEPSAAESQGKGSVSEDELIAAIKEAKGLSYETTESPRPVGQAADRPKVKARSGLPTIPSSLDQEASSAESGDSEIELVSEDPMASEDALPSGYVSFGHVSGPPPSPASPSIQYSILREEREAELDSELIIESCDASSASEESPKREQDSPPMKPGVLDAIREETSSRATEERAPSHQGPVEPDPILSFTPVTLQSRPEPSSGDGAPVPEPPKSQQQKPEEEAVSSSQSPAATEIPGPLGSDLVPPLPFFNKQKAIDLLYWRDIKQTGIVFGSFLLLLFSLTQFSVVSVVAYLALAALSATISFRIYKSVLQAVQKTDEGHPFKAYLELEITLSQEQIQKYTDCLQLYVNSTLKELRRLFLVQDLVDSLKFAVLMWLLTYVGALFNGLTLLLMAVVSMFTLPVVYVKHQAQVDQYLGLVRTHINTVVAKIQAKIPGAKRHAE</sequence>
<evidence type="ECO:0000250" key="1">
    <source>
        <dbReference type="UniProtKB" id="Q16799"/>
    </source>
</evidence>
<evidence type="ECO:0000255" key="2"/>
<evidence type="ECO:0000255" key="3">
    <source>
        <dbReference type="PROSITE-ProRule" id="PRU00170"/>
    </source>
</evidence>
<evidence type="ECO:0000256" key="4">
    <source>
        <dbReference type="SAM" id="MobiDB-lite"/>
    </source>
</evidence>
<evidence type="ECO:0000303" key="5">
    <source>
    </source>
</evidence>
<evidence type="ECO:0007744" key="6">
    <source>
    </source>
</evidence>
<proteinExistence type="evidence at protein level"/>
<name>RTN1_RAT</name>
<gene>
    <name type="primary">Rtn1</name>
    <name type="synonym">Nsp</name>
</gene>
<protein>
    <recommendedName>
        <fullName>Reticulon-1</fullName>
    </recommendedName>
    <alternativeName>
        <fullName>Neuroendocrine-specific protein</fullName>
    </alternativeName>
    <alternativeName>
        <fullName>S-rex</fullName>
    </alternativeName>
</protein>
<organism>
    <name type="scientific">Rattus norvegicus</name>
    <name type="common">Rat</name>
    <dbReference type="NCBI Taxonomy" id="10116"/>
    <lineage>
        <taxon>Eukaryota</taxon>
        <taxon>Metazoa</taxon>
        <taxon>Chordata</taxon>
        <taxon>Craniata</taxon>
        <taxon>Vertebrata</taxon>
        <taxon>Euteleostomi</taxon>
        <taxon>Mammalia</taxon>
        <taxon>Eutheria</taxon>
        <taxon>Euarchontoglires</taxon>
        <taxon>Glires</taxon>
        <taxon>Rodentia</taxon>
        <taxon>Myomorpha</taxon>
        <taxon>Muroidea</taxon>
        <taxon>Muridae</taxon>
        <taxon>Murinae</taxon>
        <taxon>Rattus</taxon>
    </lineage>
</organism>
<accession>Q64548</accession>
<accession>Q64547</accession>
<comment type="function">
    <text evidence="1">Inhibits amyloid precursor protein processing, probably by blocking BACE1 activity.</text>
</comment>
<comment type="subunit">
    <text evidence="1">Interacts with NDRG1. Interacts with BACE1. Interacts with TMEM33.</text>
</comment>
<comment type="subunit">
    <molecule>Isoform RTN1-S</molecule>
    <text evidence="1">Interacts with UGCG; regulates the ceramide glucosyltransferase activity of UGCG.</text>
</comment>
<comment type="subcellular location">
    <subcellularLocation>
        <location evidence="1">Endoplasmic reticulum membrane</location>
        <topology evidence="2">Multi-pass membrane protein</topology>
    </subcellularLocation>
    <subcellularLocation>
        <location evidence="1">Golgi apparatus membrane</location>
        <topology evidence="2">Multi-pass membrane protein</topology>
    </subcellularLocation>
</comment>
<comment type="alternative products">
    <event type="alternative splicing"/>
    <isoform>
        <id>Q64548-1</id>
        <name>RTN1-B</name>
        <name>S-RexB</name>
        <sequence type="displayed"/>
    </isoform>
    <isoform>
        <id>Q64548-2</id>
        <name>RTN1-S</name>
        <name>S-RexS</name>
        <sequence type="described" ref="VSP_005647 VSP_005648"/>
    </isoform>
</comment>
<comment type="tissue specificity">
    <text>Expressed predominantly in central and peripheral nervous system of newborn and adult rats. Low levels have been also detected in heart, adrenal gland and spleen. Expression of isoform RTN1-B is restricted to particular neuronal types.</text>
</comment>
<comment type="developmental stage">
    <text>Detected at 10 dpc in the hindbrain and at 11 dpc in the forebrain. During the next 3 embryonic days the levels of RTN1-S increases and remains stable at 13 dpc in the hindbrain and at 14 dpc in the forebrain. The levels of RTN1-B does not change as significantly during development of the hindbrain.</text>
</comment>